<accession>Q8PUH7</accession>
<feature type="chain" id="PRO_0000068278" description="UPF0212 protein MM_2357">
    <location>
        <begin position="1"/>
        <end position="129"/>
    </location>
</feature>
<comment type="similarity">
    <text evidence="1">Belongs to the UPF0212 family.</text>
</comment>
<sequence>MKNFHVVLEAAWLVRDVKTADDAIGVAISEAGKRLNPKLDFVEVDVGTTSCPVCGEPFSSVFIAANTALVGLIFEMKVFDAESAEHAERIAKSVIGKSLRDVPLTVVEVTEFERSVEKGEQQQKGKANK</sequence>
<dbReference type="EMBL" id="AE008384">
    <property type="protein sequence ID" value="AAM32053.1"/>
    <property type="molecule type" value="Genomic_DNA"/>
</dbReference>
<dbReference type="RefSeq" id="WP_011034281.1">
    <property type="nucleotide sequence ID" value="NC_003901.1"/>
</dbReference>
<dbReference type="SMR" id="Q8PUH7"/>
<dbReference type="KEGG" id="mma:MM_2357"/>
<dbReference type="PATRIC" id="fig|192952.21.peg.2697"/>
<dbReference type="eggNOG" id="arCOG02119">
    <property type="taxonomic scope" value="Archaea"/>
</dbReference>
<dbReference type="HOGENOM" id="CLU_138334_0_0_2"/>
<dbReference type="Proteomes" id="UP000000595">
    <property type="component" value="Chromosome"/>
</dbReference>
<dbReference type="HAMAP" id="MF_01223">
    <property type="entry name" value="UPF0212"/>
    <property type="match status" value="1"/>
</dbReference>
<dbReference type="InterPro" id="IPR007564">
    <property type="entry name" value="UPF0212"/>
</dbReference>
<dbReference type="NCBIfam" id="NF003035">
    <property type="entry name" value="PRK03922.1"/>
    <property type="match status" value="1"/>
</dbReference>
<dbReference type="PANTHER" id="PTHR42199">
    <property type="entry name" value="UPF0212 PROTEIN MJ0068"/>
    <property type="match status" value="1"/>
</dbReference>
<dbReference type="PANTHER" id="PTHR42199:SF1">
    <property type="entry name" value="UPF0212 PROTEIN TK1194"/>
    <property type="match status" value="1"/>
</dbReference>
<dbReference type="Pfam" id="PF04475">
    <property type="entry name" value="DUF555"/>
    <property type="match status" value="1"/>
</dbReference>
<dbReference type="PIRSF" id="PIRSF016934">
    <property type="entry name" value="UCP016934"/>
    <property type="match status" value="1"/>
</dbReference>
<proteinExistence type="inferred from homology"/>
<organism>
    <name type="scientific">Methanosarcina mazei (strain ATCC BAA-159 / DSM 3647 / Goe1 / Go1 / JCM 11833 / OCM 88)</name>
    <name type="common">Methanosarcina frisia</name>
    <dbReference type="NCBI Taxonomy" id="192952"/>
    <lineage>
        <taxon>Archaea</taxon>
        <taxon>Methanobacteriati</taxon>
        <taxon>Methanobacteriota</taxon>
        <taxon>Stenosarchaea group</taxon>
        <taxon>Methanomicrobia</taxon>
        <taxon>Methanosarcinales</taxon>
        <taxon>Methanosarcinaceae</taxon>
        <taxon>Methanosarcina</taxon>
    </lineage>
</organism>
<gene>
    <name type="ordered locus">MM_2357</name>
</gene>
<evidence type="ECO:0000255" key="1">
    <source>
        <dbReference type="HAMAP-Rule" id="MF_01223"/>
    </source>
</evidence>
<protein>
    <recommendedName>
        <fullName evidence="1">UPF0212 protein MM_2357</fullName>
    </recommendedName>
</protein>
<reference key="1">
    <citation type="journal article" date="2002" name="J. Mol. Microbiol. Biotechnol.">
        <title>The genome of Methanosarcina mazei: evidence for lateral gene transfer between Bacteria and Archaea.</title>
        <authorList>
            <person name="Deppenmeier U."/>
            <person name="Johann A."/>
            <person name="Hartsch T."/>
            <person name="Merkl R."/>
            <person name="Schmitz R.A."/>
            <person name="Martinez-Arias R."/>
            <person name="Henne A."/>
            <person name="Wiezer A."/>
            <person name="Baeumer S."/>
            <person name="Jacobi C."/>
            <person name="Brueggemann H."/>
            <person name="Lienard T."/>
            <person name="Christmann A."/>
            <person name="Boemecke M."/>
            <person name="Steckel S."/>
            <person name="Bhattacharyya A."/>
            <person name="Lykidis A."/>
            <person name="Overbeek R."/>
            <person name="Klenk H.-P."/>
            <person name="Gunsalus R.P."/>
            <person name="Fritz H.-J."/>
            <person name="Gottschalk G."/>
        </authorList>
    </citation>
    <scope>NUCLEOTIDE SEQUENCE [LARGE SCALE GENOMIC DNA]</scope>
    <source>
        <strain>ATCC BAA-159 / DSM 3647 / Goe1 / Go1 / JCM 11833 / OCM 88</strain>
    </source>
</reference>
<name>Y2357_METMA</name>